<name>SP2AB_PRIMG</name>
<gene>
    <name evidence="1" type="primary">spoIIAB</name>
</gene>
<feature type="chain" id="PRO_0000203557" description="Anti-sigma F factor">
    <location>
        <begin position="1"/>
        <end position="147"/>
    </location>
</feature>
<keyword id="KW-0067">ATP-binding</keyword>
<keyword id="KW-0418">Kinase</keyword>
<keyword id="KW-0547">Nucleotide-binding</keyword>
<keyword id="KW-0723">Serine/threonine-protein kinase</keyword>
<keyword id="KW-0749">Sporulation</keyword>
<keyword id="KW-0808">Transferase</keyword>
<accession>P35148</accession>
<organism>
    <name type="scientific">Priestia megaterium</name>
    <name type="common">Bacillus megaterium</name>
    <dbReference type="NCBI Taxonomy" id="1404"/>
    <lineage>
        <taxon>Bacteria</taxon>
        <taxon>Bacillati</taxon>
        <taxon>Bacillota</taxon>
        <taxon>Bacilli</taxon>
        <taxon>Bacillales</taxon>
        <taxon>Bacillaceae</taxon>
        <taxon>Priestia</taxon>
    </lineage>
</organism>
<comment type="function">
    <text evidence="1">Binds to sigma F and blocks its ability to form an RNA polymerase holoenzyme (E-sigma F). Phosphorylates SpoIIAA on a serine residue. This phosphorylation may enable SpoIIAA to act as an anti-anti-sigma factor that counteracts SpoIIAB and thus releases sigma F from inhibition.</text>
</comment>
<comment type="catalytic activity">
    <reaction evidence="1">
        <text>L-seryl-[protein] + ATP = O-phospho-L-seryl-[protein] + ADP + H(+)</text>
        <dbReference type="Rhea" id="RHEA:17989"/>
        <dbReference type="Rhea" id="RHEA-COMP:9863"/>
        <dbReference type="Rhea" id="RHEA-COMP:11604"/>
        <dbReference type="ChEBI" id="CHEBI:15378"/>
        <dbReference type="ChEBI" id="CHEBI:29999"/>
        <dbReference type="ChEBI" id="CHEBI:30616"/>
        <dbReference type="ChEBI" id="CHEBI:83421"/>
        <dbReference type="ChEBI" id="CHEBI:456216"/>
        <dbReference type="EC" id="2.7.11.1"/>
    </reaction>
</comment>
<comment type="catalytic activity">
    <reaction evidence="1">
        <text>L-threonyl-[protein] + ATP = O-phospho-L-threonyl-[protein] + ADP + H(+)</text>
        <dbReference type="Rhea" id="RHEA:46608"/>
        <dbReference type="Rhea" id="RHEA-COMP:11060"/>
        <dbReference type="Rhea" id="RHEA-COMP:11605"/>
        <dbReference type="ChEBI" id="CHEBI:15378"/>
        <dbReference type="ChEBI" id="CHEBI:30013"/>
        <dbReference type="ChEBI" id="CHEBI:30616"/>
        <dbReference type="ChEBI" id="CHEBI:61977"/>
        <dbReference type="ChEBI" id="CHEBI:456216"/>
        <dbReference type="EC" id="2.7.11.1"/>
    </reaction>
</comment>
<comment type="similarity">
    <text evidence="1">Belongs to the anti-sigma-factor family.</text>
</comment>
<dbReference type="EC" id="2.7.11.1" evidence="1"/>
<dbReference type="EMBL" id="X63757">
    <property type="protein sequence ID" value="CAA45287.1"/>
    <property type="molecule type" value="Genomic_DNA"/>
</dbReference>
<dbReference type="PIR" id="B48402">
    <property type="entry name" value="B48402"/>
</dbReference>
<dbReference type="RefSeq" id="WP_013059075.1">
    <property type="nucleotide sequence ID" value="NZ_VYTX01000003.1"/>
</dbReference>
<dbReference type="SMR" id="P35148"/>
<dbReference type="GO" id="GO:0005524">
    <property type="term" value="F:ATP binding"/>
    <property type="evidence" value="ECO:0007669"/>
    <property type="project" value="UniProtKB-KW"/>
</dbReference>
<dbReference type="GO" id="GO:0106310">
    <property type="term" value="F:protein serine kinase activity"/>
    <property type="evidence" value="ECO:0007669"/>
    <property type="project" value="RHEA"/>
</dbReference>
<dbReference type="GO" id="GO:0004674">
    <property type="term" value="F:protein serine/threonine kinase activity"/>
    <property type="evidence" value="ECO:0007669"/>
    <property type="project" value="UniProtKB-KW"/>
</dbReference>
<dbReference type="GO" id="GO:0016989">
    <property type="term" value="F:sigma factor antagonist activity"/>
    <property type="evidence" value="ECO:0007669"/>
    <property type="project" value="InterPro"/>
</dbReference>
<dbReference type="GO" id="GO:0030436">
    <property type="term" value="P:asexual sporulation"/>
    <property type="evidence" value="ECO:0007669"/>
    <property type="project" value="UniProtKB-UniRule"/>
</dbReference>
<dbReference type="GO" id="GO:0042174">
    <property type="term" value="P:negative regulation of sporulation resulting in formation of a cellular spore"/>
    <property type="evidence" value="ECO:0007669"/>
    <property type="project" value="InterPro"/>
</dbReference>
<dbReference type="GO" id="GO:0030435">
    <property type="term" value="P:sporulation resulting in formation of a cellular spore"/>
    <property type="evidence" value="ECO:0007669"/>
    <property type="project" value="UniProtKB-KW"/>
</dbReference>
<dbReference type="Gene3D" id="3.30.565.10">
    <property type="entry name" value="Histidine kinase-like ATPase, C-terminal domain"/>
    <property type="match status" value="1"/>
</dbReference>
<dbReference type="HAMAP" id="MF_00637">
    <property type="entry name" value="Anti_sigma_F"/>
    <property type="match status" value="1"/>
</dbReference>
<dbReference type="InterPro" id="IPR050267">
    <property type="entry name" value="Anti-sigma-factor_SerPK"/>
</dbReference>
<dbReference type="InterPro" id="IPR010194">
    <property type="entry name" value="Anti-sigma_F"/>
</dbReference>
<dbReference type="InterPro" id="IPR036890">
    <property type="entry name" value="HATPase_C_sf"/>
</dbReference>
<dbReference type="NCBIfam" id="TIGR01925">
    <property type="entry name" value="spIIAB"/>
    <property type="match status" value="1"/>
</dbReference>
<dbReference type="PANTHER" id="PTHR35526:SF3">
    <property type="entry name" value="ANTI-SIGMA-F FACTOR RSBW"/>
    <property type="match status" value="1"/>
</dbReference>
<dbReference type="PANTHER" id="PTHR35526">
    <property type="entry name" value="ANTI-SIGMA-F FACTOR RSBW-RELATED"/>
    <property type="match status" value="1"/>
</dbReference>
<dbReference type="Pfam" id="PF13581">
    <property type="entry name" value="HATPase_c_2"/>
    <property type="match status" value="1"/>
</dbReference>
<dbReference type="SMART" id="SM00387">
    <property type="entry name" value="HATPase_c"/>
    <property type="match status" value="1"/>
</dbReference>
<dbReference type="SUPFAM" id="SSF55874">
    <property type="entry name" value="ATPase domain of HSP90 chaperone/DNA topoisomerase II/histidine kinase"/>
    <property type="match status" value="1"/>
</dbReference>
<proteinExistence type="inferred from homology"/>
<reference key="1">
    <citation type="journal article" date="1992" name="Biochimie">
        <title>Cloning and sequencing of the Bacillus megaterium spoIIA operon.</title>
        <authorList>
            <person name="Tao Y.P."/>
            <person name="Hudspeth D.S.S."/>
            <person name="Vary P.S."/>
        </authorList>
    </citation>
    <scope>NUCLEOTIDE SEQUENCE [GENOMIC DNA]</scope>
</reference>
<evidence type="ECO:0000255" key="1">
    <source>
        <dbReference type="HAMAP-Rule" id="MF_00637"/>
    </source>
</evidence>
<sequence>MKNQMNLQFSALSQNESFARVTVASFITQLDPTMDELTEIKTVVSEAVTNAIIHGYESNSDGVVYISVTLHEDGVVELMIRDEGIGIDNVDEAKQPLYTTKPDLERSGMGFTIMENFMDEIRVESTVLEGTTLYLKKHLTNSKALCN</sequence>
<protein>
    <recommendedName>
        <fullName evidence="1">Anti-sigma F factor</fullName>
        <ecNumber evidence="1">2.7.11.1</ecNumber>
    </recommendedName>
    <alternativeName>
        <fullName evidence="1">Stage II sporulation protein AB</fullName>
    </alternativeName>
</protein>